<protein>
    <recommendedName>
        <fullName evidence="1">Small ribosomal subunit protein bS21</fullName>
    </recommendedName>
    <alternativeName>
        <fullName evidence="3">30S ribosomal protein S21</fullName>
    </alternativeName>
</protein>
<accession>B7ND54</accession>
<sequence length="71" mass="8500">MPVIKVRENEPFDVALRRFKRSCEKAGVLAEVRRREFYEKPTTERKRAKASAVKRHAKKLARENARRTRLY</sequence>
<organism>
    <name type="scientific">Escherichia coli O17:K52:H18 (strain UMN026 / ExPEC)</name>
    <dbReference type="NCBI Taxonomy" id="585056"/>
    <lineage>
        <taxon>Bacteria</taxon>
        <taxon>Pseudomonadati</taxon>
        <taxon>Pseudomonadota</taxon>
        <taxon>Gammaproteobacteria</taxon>
        <taxon>Enterobacterales</taxon>
        <taxon>Enterobacteriaceae</taxon>
        <taxon>Escherichia</taxon>
    </lineage>
</organism>
<feature type="chain" id="PRO_1000120617" description="Small ribosomal subunit protein bS21">
    <location>
        <begin position="1"/>
        <end position="71"/>
    </location>
</feature>
<feature type="region of interest" description="Disordered" evidence="2">
    <location>
        <begin position="43"/>
        <end position="71"/>
    </location>
</feature>
<feature type="compositionally biased region" description="Basic residues" evidence="2">
    <location>
        <begin position="46"/>
        <end position="59"/>
    </location>
</feature>
<feature type="compositionally biased region" description="Basic and acidic residues" evidence="2">
    <location>
        <begin position="60"/>
        <end position="71"/>
    </location>
</feature>
<gene>
    <name evidence="1" type="primary">rpsU</name>
    <name type="ordered locus">ECUMN_3548</name>
</gene>
<keyword id="KW-0687">Ribonucleoprotein</keyword>
<keyword id="KW-0689">Ribosomal protein</keyword>
<reference key="1">
    <citation type="journal article" date="2009" name="PLoS Genet.">
        <title>Organised genome dynamics in the Escherichia coli species results in highly diverse adaptive paths.</title>
        <authorList>
            <person name="Touchon M."/>
            <person name="Hoede C."/>
            <person name="Tenaillon O."/>
            <person name="Barbe V."/>
            <person name="Baeriswyl S."/>
            <person name="Bidet P."/>
            <person name="Bingen E."/>
            <person name="Bonacorsi S."/>
            <person name="Bouchier C."/>
            <person name="Bouvet O."/>
            <person name="Calteau A."/>
            <person name="Chiapello H."/>
            <person name="Clermont O."/>
            <person name="Cruveiller S."/>
            <person name="Danchin A."/>
            <person name="Diard M."/>
            <person name="Dossat C."/>
            <person name="Karoui M.E."/>
            <person name="Frapy E."/>
            <person name="Garry L."/>
            <person name="Ghigo J.M."/>
            <person name="Gilles A.M."/>
            <person name="Johnson J."/>
            <person name="Le Bouguenec C."/>
            <person name="Lescat M."/>
            <person name="Mangenot S."/>
            <person name="Martinez-Jehanne V."/>
            <person name="Matic I."/>
            <person name="Nassif X."/>
            <person name="Oztas S."/>
            <person name="Petit M.A."/>
            <person name="Pichon C."/>
            <person name="Rouy Z."/>
            <person name="Ruf C.S."/>
            <person name="Schneider D."/>
            <person name="Tourret J."/>
            <person name="Vacherie B."/>
            <person name="Vallenet D."/>
            <person name="Medigue C."/>
            <person name="Rocha E.P.C."/>
            <person name="Denamur E."/>
        </authorList>
    </citation>
    <scope>NUCLEOTIDE SEQUENCE [LARGE SCALE GENOMIC DNA]</scope>
    <source>
        <strain>UMN026 / ExPEC</strain>
    </source>
</reference>
<evidence type="ECO:0000255" key="1">
    <source>
        <dbReference type="HAMAP-Rule" id="MF_00358"/>
    </source>
</evidence>
<evidence type="ECO:0000256" key="2">
    <source>
        <dbReference type="SAM" id="MobiDB-lite"/>
    </source>
</evidence>
<evidence type="ECO:0000305" key="3"/>
<proteinExistence type="inferred from homology"/>
<name>RS21_ECOLU</name>
<comment type="similarity">
    <text evidence="1">Belongs to the bacterial ribosomal protein bS21 family.</text>
</comment>
<dbReference type="EMBL" id="CU928163">
    <property type="protein sequence ID" value="CAR14704.1"/>
    <property type="molecule type" value="Genomic_DNA"/>
</dbReference>
<dbReference type="RefSeq" id="WP_001144069.1">
    <property type="nucleotide sequence ID" value="NC_011751.1"/>
</dbReference>
<dbReference type="RefSeq" id="YP_002414209.1">
    <property type="nucleotide sequence ID" value="NC_011751.1"/>
</dbReference>
<dbReference type="SMR" id="B7ND54"/>
<dbReference type="STRING" id="585056.ECUMN_3548"/>
<dbReference type="GeneID" id="98390195"/>
<dbReference type="KEGG" id="eum:ECUMN_3548"/>
<dbReference type="PATRIC" id="fig|585056.7.peg.3723"/>
<dbReference type="HOGENOM" id="CLU_159258_1_0_6"/>
<dbReference type="PRO" id="PR:B7ND54"/>
<dbReference type="Proteomes" id="UP000007097">
    <property type="component" value="Chromosome"/>
</dbReference>
<dbReference type="GO" id="GO:1990904">
    <property type="term" value="C:ribonucleoprotein complex"/>
    <property type="evidence" value="ECO:0007669"/>
    <property type="project" value="UniProtKB-KW"/>
</dbReference>
<dbReference type="GO" id="GO:0005840">
    <property type="term" value="C:ribosome"/>
    <property type="evidence" value="ECO:0007669"/>
    <property type="project" value="UniProtKB-KW"/>
</dbReference>
<dbReference type="GO" id="GO:0003735">
    <property type="term" value="F:structural constituent of ribosome"/>
    <property type="evidence" value="ECO:0007669"/>
    <property type="project" value="InterPro"/>
</dbReference>
<dbReference type="GO" id="GO:0006412">
    <property type="term" value="P:translation"/>
    <property type="evidence" value="ECO:0007669"/>
    <property type="project" value="UniProtKB-UniRule"/>
</dbReference>
<dbReference type="FunFam" id="1.20.5.1150:FF:000001">
    <property type="entry name" value="30S ribosomal protein S21"/>
    <property type="match status" value="1"/>
</dbReference>
<dbReference type="Gene3D" id="1.20.5.1150">
    <property type="entry name" value="Ribosomal protein S8"/>
    <property type="match status" value="1"/>
</dbReference>
<dbReference type="HAMAP" id="MF_00358">
    <property type="entry name" value="Ribosomal_bS21"/>
    <property type="match status" value="1"/>
</dbReference>
<dbReference type="InterPro" id="IPR001911">
    <property type="entry name" value="Ribosomal_bS21"/>
</dbReference>
<dbReference type="InterPro" id="IPR018278">
    <property type="entry name" value="Ribosomal_bS21_CS"/>
</dbReference>
<dbReference type="InterPro" id="IPR038380">
    <property type="entry name" value="Ribosomal_bS21_sf"/>
</dbReference>
<dbReference type="NCBIfam" id="TIGR00030">
    <property type="entry name" value="S21p"/>
    <property type="match status" value="1"/>
</dbReference>
<dbReference type="PANTHER" id="PTHR21109">
    <property type="entry name" value="MITOCHONDRIAL 28S RIBOSOMAL PROTEIN S21"/>
    <property type="match status" value="1"/>
</dbReference>
<dbReference type="PANTHER" id="PTHR21109:SF22">
    <property type="entry name" value="SMALL RIBOSOMAL SUBUNIT PROTEIN BS21"/>
    <property type="match status" value="1"/>
</dbReference>
<dbReference type="Pfam" id="PF01165">
    <property type="entry name" value="Ribosomal_S21"/>
    <property type="match status" value="1"/>
</dbReference>
<dbReference type="PRINTS" id="PR00976">
    <property type="entry name" value="RIBOSOMALS21"/>
</dbReference>
<dbReference type="PROSITE" id="PS01181">
    <property type="entry name" value="RIBOSOMAL_S21"/>
    <property type="match status" value="1"/>
</dbReference>